<accession>P52513</accession>
<proteinExistence type="inferred from homology"/>
<comment type="function">
    <text evidence="1">The heterodimer glycoprotein H-glycoprotein L is required for the fusion of viral and plasma membranes leading to virus entry into the host cell. Acts as a functional inhibitor of gH and maintains gH in an inhibited form. Upon binding to host integrins, gL dissociates from gH leading to activation of the viral fusion glycoproteins gB and gH.</text>
</comment>
<comment type="subunit">
    <text evidence="1">Interacts with glycoprotein H (gH); this interaction is necessary for the correct processing and cell surface expression of gH.</text>
</comment>
<comment type="subcellular location">
    <subcellularLocation>
        <location evidence="1">Virion membrane</location>
        <topology evidence="1">Peripheral membrane protein</topology>
        <orientation evidence="1">Extracellular side</orientation>
    </subcellularLocation>
    <subcellularLocation>
        <location evidence="1">Host cell membrane</location>
        <topology evidence="1">Peripheral membrane protein</topology>
        <orientation evidence="1">Extracellular side</orientation>
    </subcellularLocation>
    <subcellularLocation>
        <location evidence="1">Host Golgi apparatus</location>
        <location evidence="1">Host trans-Golgi network</location>
    </subcellularLocation>
    <text evidence="1">gL associates with the extravirion surface through its binding to gH. During virion morphogenesis, this protein probably accumulates in the host trans-Golgi where secondary envelopment occurs.</text>
</comment>
<comment type="similarity">
    <text evidence="2">Belongs to the herpesviridae glycoprotein L (gL) family. Betaherpesvirinae gL subfamily.</text>
</comment>
<evidence type="ECO:0000255" key="1">
    <source>
        <dbReference type="HAMAP-Rule" id="MF_04036"/>
    </source>
</evidence>
<evidence type="ECO:0000255" key="2">
    <source>
        <dbReference type="PROSITE-ProRule" id="PRU01369"/>
    </source>
</evidence>
<keyword id="KW-1015">Disulfide bond</keyword>
<keyword id="KW-1169">Fusion of virus membrane with host cell membrane</keyword>
<keyword id="KW-1168">Fusion of virus membrane with host membrane</keyword>
<keyword id="KW-0325">Glycoprotein</keyword>
<keyword id="KW-1032">Host cell membrane</keyword>
<keyword id="KW-1040">Host Golgi apparatus</keyword>
<keyword id="KW-1043">Host membrane</keyword>
<keyword id="KW-0472">Membrane</keyword>
<keyword id="KW-0732">Signal</keyword>
<keyword id="KW-0261">Viral envelope protein</keyword>
<keyword id="KW-1162">Viral penetration into host cytoplasm</keyword>
<keyword id="KW-0946">Virion</keyword>
<keyword id="KW-1160">Virus entry into host cell</keyword>
<name>GL_MUHVK</name>
<gene>
    <name evidence="1" type="primary">gL</name>
    <name type="synonym">UL115</name>
</gene>
<sequence length="274" mass="31239">MMPLLLLILLSTRNLLGAAQSQESPVAGERRALDLTTVYVLPRSEPINATVEHKCREALASCYNGSEFQPLHDDGPIRPDPYRFSTMIRFKRSYGELPLPIELNDEFLEQLSLLHNNTDQLRVLLTLMRTSRASDWMSFLGGYTQCDAPKSVVFTCVESVCYEHDLMRLNYTTDLFTENVLGLDVSPPVLSVLVLLRNNHTKAESVVRVPTSSMSMLDGTYNLLRTILGHMSLDTDLIGVLRSYRDRFPAVFSVSDQIKITRQHYRPQYQRKRP</sequence>
<organismHost>
    <name type="scientific">Mus musculus</name>
    <name type="common">Mouse</name>
    <dbReference type="NCBI Taxonomy" id="10090"/>
</organismHost>
<reference key="1">
    <citation type="journal article" date="1994" name="J. Gen. Virol.">
        <title>Identification, sequencing and expression of the glycoprotein L gene of murine cytomegalovirus.</title>
        <authorList>
            <person name="Xu J."/>
            <person name="Scalzo A.A."/>
            <person name="Lyons P.A."/>
            <person name="Farrell H.E."/>
            <person name="Rawlinson W.D."/>
            <person name="Shellam G.R."/>
        </authorList>
    </citation>
    <scope>NUCLEOTIDE SEQUENCE [GENOMIC DNA]</scope>
</reference>
<dbReference type="EMBL" id="L32962">
    <property type="protein sequence ID" value="AAA57343.1"/>
    <property type="molecule type" value="Genomic_DNA"/>
</dbReference>
<dbReference type="SMR" id="P52513"/>
<dbReference type="GO" id="GO:0044177">
    <property type="term" value="C:host cell Golgi apparatus"/>
    <property type="evidence" value="ECO:0007669"/>
    <property type="project" value="UniProtKB-SubCell"/>
</dbReference>
<dbReference type="GO" id="GO:0020002">
    <property type="term" value="C:host cell plasma membrane"/>
    <property type="evidence" value="ECO:0007669"/>
    <property type="project" value="UniProtKB-SubCell"/>
</dbReference>
<dbReference type="GO" id="GO:0016020">
    <property type="term" value="C:membrane"/>
    <property type="evidence" value="ECO:0007669"/>
    <property type="project" value="UniProtKB-KW"/>
</dbReference>
<dbReference type="GO" id="GO:0019031">
    <property type="term" value="C:viral envelope"/>
    <property type="evidence" value="ECO:0007669"/>
    <property type="project" value="UniProtKB-UniRule"/>
</dbReference>
<dbReference type="GO" id="GO:0055036">
    <property type="term" value="C:virion membrane"/>
    <property type="evidence" value="ECO:0007669"/>
    <property type="project" value="UniProtKB-SubCell"/>
</dbReference>
<dbReference type="GO" id="GO:0019064">
    <property type="term" value="P:fusion of virus membrane with host plasma membrane"/>
    <property type="evidence" value="ECO:0007669"/>
    <property type="project" value="UniProtKB-UniRule"/>
</dbReference>
<dbReference type="GO" id="GO:0046718">
    <property type="term" value="P:symbiont entry into host cell"/>
    <property type="evidence" value="ECO:0007669"/>
    <property type="project" value="UniProtKB-KW"/>
</dbReference>
<dbReference type="HAMAP" id="MF_04036">
    <property type="entry name" value="HSV_GL_betahv"/>
    <property type="match status" value="1"/>
</dbReference>
<dbReference type="InterPro" id="IPR002689">
    <property type="entry name" value="Cytomegalo_gL"/>
</dbReference>
<dbReference type="Pfam" id="PF01801">
    <property type="entry name" value="Cytomega_gL"/>
    <property type="match status" value="1"/>
</dbReference>
<dbReference type="PROSITE" id="PS52025">
    <property type="entry name" value="GL_BHV"/>
    <property type="match status" value="1"/>
</dbReference>
<feature type="signal peptide" evidence="1">
    <location>
        <begin position="1"/>
        <end position="21"/>
    </location>
</feature>
<feature type="chain" id="PRO_0000038288" description="Envelope glycoprotein L" evidence="1">
    <location>
        <begin position="22"/>
        <end position="274"/>
    </location>
</feature>
<feature type="domain" description="gL betaherpesvirus-type" evidence="2">
    <location>
        <begin position="51"/>
        <end position="251"/>
    </location>
</feature>
<feature type="disulfide bond" description="Interchain" evidence="2">
    <location>
        <position position="55"/>
    </location>
</feature>
<feature type="disulfide bond" description="Interchain" evidence="2">
    <location>
        <position position="62"/>
    </location>
</feature>
<feature type="disulfide bond" description="Interchain" evidence="2">
    <location>
        <position position="146"/>
    </location>
</feature>
<feature type="disulfide bond" evidence="2">
    <location>
        <begin position="156"/>
        <end position="161"/>
    </location>
</feature>
<organism>
    <name type="scientific">Murid herpesvirus 1 (strain K181)</name>
    <name type="common">MuHV-1</name>
    <name type="synonym">Mouse cytomegalovirus</name>
    <dbReference type="NCBI Taxonomy" id="69156"/>
    <lineage>
        <taxon>Viruses</taxon>
        <taxon>Duplodnaviria</taxon>
        <taxon>Heunggongvirae</taxon>
        <taxon>Peploviricota</taxon>
        <taxon>Herviviricetes</taxon>
        <taxon>Herpesvirales</taxon>
        <taxon>Orthoherpesviridae</taxon>
        <taxon>Betaherpesvirinae</taxon>
        <taxon>Muromegalovirus</taxon>
        <taxon>Muromegalovirus muridbeta1</taxon>
        <taxon>Murid herpesvirus 1</taxon>
    </lineage>
</organism>
<protein>
    <recommendedName>
        <fullName evidence="1">Envelope glycoprotein L</fullName>
        <shortName evidence="1">gL</shortName>
    </recommendedName>
</protein>